<reference key="1">
    <citation type="journal article" date="2011" name="J. Bacteriol.">
        <title>Comparative genomics of 28 Salmonella enterica isolates: evidence for CRISPR-mediated adaptive sublineage evolution.</title>
        <authorList>
            <person name="Fricke W.F."/>
            <person name="Mammel M.K."/>
            <person name="McDermott P.F."/>
            <person name="Tartera C."/>
            <person name="White D.G."/>
            <person name="Leclerc J.E."/>
            <person name="Ravel J."/>
            <person name="Cebula T.A."/>
        </authorList>
    </citation>
    <scope>NUCLEOTIDE SEQUENCE [LARGE SCALE GENOMIC DNA]</scope>
    <source>
        <strain>CT_02021853</strain>
    </source>
</reference>
<feature type="chain" id="PRO_1000133639" description="Succinylglutamate desuccinylase">
    <location>
        <begin position="1"/>
        <end position="322"/>
    </location>
</feature>
<feature type="active site" evidence="1">
    <location>
        <position position="210"/>
    </location>
</feature>
<feature type="binding site" evidence="1">
    <location>
        <position position="53"/>
    </location>
    <ligand>
        <name>Zn(2+)</name>
        <dbReference type="ChEBI" id="CHEBI:29105"/>
    </ligand>
</feature>
<feature type="binding site" evidence="1">
    <location>
        <position position="56"/>
    </location>
    <ligand>
        <name>Zn(2+)</name>
        <dbReference type="ChEBI" id="CHEBI:29105"/>
    </ligand>
</feature>
<feature type="binding site" evidence="1">
    <location>
        <position position="147"/>
    </location>
    <ligand>
        <name>Zn(2+)</name>
        <dbReference type="ChEBI" id="CHEBI:29105"/>
    </ligand>
</feature>
<proteinExistence type="inferred from homology"/>
<organism>
    <name type="scientific">Salmonella dublin (strain CT_02021853)</name>
    <dbReference type="NCBI Taxonomy" id="439851"/>
    <lineage>
        <taxon>Bacteria</taxon>
        <taxon>Pseudomonadati</taxon>
        <taxon>Pseudomonadota</taxon>
        <taxon>Gammaproteobacteria</taxon>
        <taxon>Enterobacterales</taxon>
        <taxon>Enterobacteriaceae</taxon>
        <taxon>Salmonella</taxon>
    </lineage>
</organism>
<keyword id="KW-0056">Arginine metabolism</keyword>
<keyword id="KW-0378">Hydrolase</keyword>
<keyword id="KW-0479">Metal-binding</keyword>
<keyword id="KW-0862">Zinc</keyword>
<sequence length="322" mass="35634">MDNFLALTLSGTTPRVTQGKSAGFRWRWLGHGLLELTPDAPVDRALILSAGIHGNETAPVEMLDKLLSALFSGSLTLTWRVLVVLGNPQALAAGIRYCHSDMNRMFGGRWQSFAESDETRRARELELSLETFFSSGHARVRWHLDLHTAIRGSHHLRFGVLPQRDRPWETDFLAWLGAAGLEALVFHQAPGGTFTHFSSEHFGALSCALELGKALPFRQNDLTQFNVTSQALSALLSGVETSTSFSPPLRYRVVSQITRHSDKFALYMDAQTLNFTAFAKGTLLAEEGDKRVTVTHDVEYVLFPNPSVACGLRAGLMLERLP</sequence>
<name>ASTE_SALDC</name>
<dbReference type="EC" id="3.5.1.96" evidence="1"/>
<dbReference type="EMBL" id="CP001144">
    <property type="protein sequence ID" value="ACH74276.1"/>
    <property type="molecule type" value="Genomic_DNA"/>
</dbReference>
<dbReference type="RefSeq" id="WP_000368464.1">
    <property type="nucleotide sequence ID" value="NC_011205.1"/>
</dbReference>
<dbReference type="SMR" id="B5FJD4"/>
<dbReference type="KEGG" id="sed:SeD_A2039"/>
<dbReference type="HOGENOM" id="CLU_071608_0_0_6"/>
<dbReference type="UniPathway" id="UPA00185">
    <property type="reaction ID" value="UER00283"/>
</dbReference>
<dbReference type="Proteomes" id="UP000008322">
    <property type="component" value="Chromosome"/>
</dbReference>
<dbReference type="GO" id="GO:0016788">
    <property type="term" value="F:hydrolase activity, acting on ester bonds"/>
    <property type="evidence" value="ECO:0007669"/>
    <property type="project" value="UniProtKB-UniRule"/>
</dbReference>
<dbReference type="GO" id="GO:0009017">
    <property type="term" value="F:succinylglutamate desuccinylase activity"/>
    <property type="evidence" value="ECO:0007669"/>
    <property type="project" value="UniProtKB-EC"/>
</dbReference>
<dbReference type="GO" id="GO:0008270">
    <property type="term" value="F:zinc ion binding"/>
    <property type="evidence" value="ECO:0007669"/>
    <property type="project" value="UniProtKB-UniRule"/>
</dbReference>
<dbReference type="GO" id="GO:0019544">
    <property type="term" value="P:arginine catabolic process to glutamate"/>
    <property type="evidence" value="ECO:0007669"/>
    <property type="project" value="UniProtKB-UniRule"/>
</dbReference>
<dbReference type="GO" id="GO:0019545">
    <property type="term" value="P:arginine catabolic process to succinate"/>
    <property type="evidence" value="ECO:0007669"/>
    <property type="project" value="UniProtKB-UniRule"/>
</dbReference>
<dbReference type="CDD" id="cd03855">
    <property type="entry name" value="M14_ASTE"/>
    <property type="match status" value="1"/>
</dbReference>
<dbReference type="FunFam" id="3.40.630.10:FF:000017">
    <property type="entry name" value="Succinylglutamate desuccinylase"/>
    <property type="match status" value="1"/>
</dbReference>
<dbReference type="Gene3D" id="3.40.630.10">
    <property type="entry name" value="Zn peptidases"/>
    <property type="match status" value="1"/>
</dbReference>
<dbReference type="HAMAP" id="MF_00767">
    <property type="entry name" value="Arg_catab_AstE"/>
    <property type="match status" value="1"/>
</dbReference>
<dbReference type="InterPro" id="IPR050178">
    <property type="entry name" value="AspA/AstE_fam"/>
</dbReference>
<dbReference type="InterPro" id="IPR055438">
    <property type="entry name" value="AstE_AspA_cat"/>
</dbReference>
<dbReference type="InterPro" id="IPR007036">
    <property type="entry name" value="Aste_AspA_hybrid_dom"/>
</dbReference>
<dbReference type="InterPro" id="IPR016681">
    <property type="entry name" value="SuccinylGlu_desuccinylase"/>
</dbReference>
<dbReference type="NCBIfam" id="TIGR03242">
    <property type="entry name" value="arg_catab_astE"/>
    <property type="match status" value="1"/>
</dbReference>
<dbReference type="NCBIfam" id="NF003706">
    <property type="entry name" value="PRK05324.1"/>
    <property type="match status" value="1"/>
</dbReference>
<dbReference type="PANTHER" id="PTHR15162">
    <property type="entry name" value="ASPARTOACYLASE"/>
    <property type="match status" value="1"/>
</dbReference>
<dbReference type="PANTHER" id="PTHR15162:SF7">
    <property type="entry name" value="SUCCINYLGLUTAMATE DESUCCINYLASE"/>
    <property type="match status" value="1"/>
</dbReference>
<dbReference type="Pfam" id="PF24827">
    <property type="entry name" value="AstE_AspA_cat"/>
    <property type="match status" value="1"/>
</dbReference>
<dbReference type="Pfam" id="PF04952">
    <property type="entry name" value="AstE_AspA_hybrid"/>
    <property type="match status" value="1"/>
</dbReference>
<dbReference type="SUPFAM" id="SSF53187">
    <property type="entry name" value="Zn-dependent exopeptidases"/>
    <property type="match status" value="1"/>
</dbReference>
<gene>
    <name evidence="1" type="primary">astE</name>
    <name type="ordered locus">SeD_A2039</name>
</gene>
<evidence type="ECO:0000255" key="1">
    <source>
        <dbReference type="HAMAP-Rule" id="MF_00767"/>
    </source>
</evidence>
<accession>B5FJD4</accession>
<comment type="function">
    <text evidence="1">Transforms N(2)-succinylglutamate into succinate and glutamate.</text>
</comment>
<comment type="catalytic activity">
    <reaction evidence="1">
        <text>N-succinyl-L-glutamate + H2O = L-glutamate + succinate</text>
        <dbReference type="Rhea" id="RHEA:15169"/>
        <dbReference type="ChEBI" id="CHEBI:15377"/>
        <dbReference type="ChEBI" id="CHEBI:29985"/>
        <dbReference type="ChEBI" id="CHEBI:30031"/>
        <dbReference type="ChEBI" id="CHEBI:58763"/>
        <dbReference type="EC" id="3.5.1.96"/>
    </reaction>
</comment>
<comment type="cofactor">
    <cofactor evidence="1">
        <name>Zn(2+)</name>
        <dbReference type="ChEBI" id="CHEBI:29105"/>
    </cofactor>
    <text evidence="1">Binds 1 zinc ion per subunit.</text>
</comment>
<comment type="pathway">
    <text evidence="1">Amino-acid degradation; L-arginine degradation via AST pathway; L-glutamate and succinate from L-arginine: step 5/5.</text>
</comment>
<comment type="similarity">
    <text evidence="1">Belongs to the AspA/AstE family. Succinylglutamate desuccinylase subfamily.</text>
</comment>
<protein>
    <recommendedName>
        <fullName evidence="1">Succinylglutamate desuccinylase</fullName>
        <ecNumber evidence="1">3.5.1.96</ecNumber>
    </recommendedName>
</protein>